<accession>A3M562</accession>
<reference key="1">
    <citation type="journal article" date="2007" name="Genes Dev.">
        <title>New insights into Acinetobacter baumannii pathogenesis revealed by high-density pyrosequencing and transposon mutagenesis.</title>
        <authorList>
            <person name="Smith M.G."/>
            <person name="Gianoulis T.A."/>
            <person name="Pukatzki S."/>
            <person name="Mekalanos J.J."/>
            <person name="Ornston L.N."/>
            <person name="Gerstein M."/>
            <person name="Snyder M."/>
        </authorList>
    </citation>
    <scope>NUCLEOTIDE SEQUENCE [LARGE SCALE GENOMIC DNA]</scope>
    <source>
        <strain>ATCC 17978 / DSM 105126 / CIP 53.77 / LMG 1025 / NCDC KC755 / 5377</strain>
    </source>
</reference>
<feature type="chain" id="PRO_1000131722" description="Co-chaperone protein HscB homolog">
    <location>
        <begin position="1"/>
        <end position="172"/>
    </location>
</feature>
<feature type="domain" description="J" evidence="1">
    <location>
        <begin position="2"/>
        <end position="69"/>
    </location>
</feature>
<evidence type="ECO:0000255" key="1">
    <source>
        <dbReference type="HAMAP-Rule" id="MF_00682"/>
    </source>
</evidence>
<organism>
    <name type="scientific">Acinetobacter baumannii (strain ATCC 17978 / DSM 105126 / CIP 53.77 / LMG 1025 / NCDC KC755 / 5377)</name>
    <dbReference type="NCBI Taxonomy" id="400667"/>
    <lineage>
        <taxon>Bacteria</taxon>
        <taxon>Pseudomonadati</taxon>
        <taxon>Pseudomonadota</taxon>
        <taxon>Gammaproteobacteria</taxon>
        <taxon>Moraxellales</taxon>
        <taxon>Moraxellaceae</taxon>
        <taxon>Acinetobacter</taxon>
        <taxon>Acinetobacter calcoaceticus/baumannii complex</taxon>
    </lineage>
</organism>
<name>HSCB_ACIBT</name>
<sequence>MNHFELFNLPVALDIDLASLKSNFLSLQQQYHPDKAADKDQALIKSSEINQAFKTLSQVDSRAAYLLALKKQDHHLDQSISDFEFLQSALELREQLDEATSSEHLRTLRLEVQQWIDGLVREFKIDYSEEDWAEARDTVRKLRFFQRVLNDIDKAEDQLLDDEDSFDLDDDF</sequence>
<proteinExistence type="inferred from homology"/>
<gene>
    <name evidence="1" type="primary">hscB</name>
    <name type="ordered locus">A1S_1629</name>
</gene>
<comment type="function">
    <text evidence="1">Co-chaperone involved in the maturation of iron-sulfur cluster-containing proteins. Seems to help targeting proteins to be folded toward HscA.</text>
</comment>
<comment type="subunit">
    <text evidence="1">Interacts with HscA and stimulates its ATPase activity.</text>
</comment>
<comment type="similarity">
    <text evidence="1">Belongs to the HscB family.</text>
</comment>
<dbReference type="EMBL" id="CP000521">
    <property type="protein sequence ID" value="ABO12056.2"/>
    <property type="molecule type" value="Genomic_DNA"/>
</dbReference>
<dbReference type="RefSeq" id="WP_001015254.1">
    <property type="nucleotide sequence ID" value="NZ_CP053098.1"/>
</dbReference>
<dbReference type="SMR" id="A3M562"/>
<dbReference type="GeneID" id="92893838"/>
<dbReference type="KEGG" id="acb:A1S_1629"/>
<dbReference type="HOGENOM" id="CLU_068529_2_0_6"/>
<dbReference type="GO" id="GO:0001671">
    <property type="term" value="F:ATPase activator activity"/>
    <property type="evidence" value="ECO:0007669"/>
    <property type="project" value="InterPro"/>
</dbReference>
<dbReference type="GO" id="GO:0051087">
    <property type="term" value="F:protein-folding chaperone binding"/>
    <property type="evidence" value="ECO:0007669"/>
    <property type="project" value="InterPro"/>
</dbReference>
<dbReference type="GO" id="GO:0044571">
    <property type="term" value="P:[2Fe-2S] cluster assembly"/>
    <property type="evidence" value="ECO:0007669"/>
    <property type="project" value="InterPro"/>
</dbReference>
<dbReference type="GO" id="GO:0051259">
    <property type="term" value="P:protein complex oligomerization"/>
    <property type="evidence" value="ECO:0007669"/>
    <property type="project" value="InterPro"/>
</dbReference>
<dbReference type="GO" id="GO:0006457">
    <property type="term" value="P:protein folding"/>
    <property type="evidence" value="ECO:0007669"/>
    <property type="project" value="UniProtKB-UniRule"/>
</dbReference>
<dbReference type="CDD" id="cd06257">
    <property type="entry name" value="DnaJ"/>
    <property type="match status" value="1"/>
</dbReference>
<dbReference type="Gene3D" id="1.10.287.110">
    <property type="entry name" value="DnaJ domain"/>
    <property type="match status" value="1"/>
</dbReference>
<dbReference type="Gene3D" id="1.20.1280.20">
    <property type="entry name" value="HscB, C-terminal domain"/>
    <property type="match status" value="1"/>
</dbReference>
<dbReference type="HAMAP" id="MF_00682">
    <property type="entry name" value="HscB"/>
    <property type="match status" value="1"/>
</dbReference>
<dbReference type="InterPro" id="IPR001623">
    <property type="entry name" value="DnaJ_domain"/>
</dbReference>
<dbReference type="InterPro" id="IPR004640">
    <property type="entry name" value="HscB"/>
</dbReference>
<dbReference type="InterPro" id="IPR036386">
    <property type="entry name" value="HscB_C_sf"/>
</dbReference>
<dbReference type="InterPro" id="IPR009073">
    <property type="entry name" value="HscB_oligo_C"/>
</dbReference>
<dbReference type="InterPro" id="IPR036869">
    <property type="entry name" value="J_dom_sf"/>
</dbReference>
<dbReference type="NCBIfam" id="TIGR00714">
    <property type="entry name" value="hscB"/>
    <property type="match status" value="1"/>
</dbReference>
<dbReference type="PANTHER" id="PTHR14021">
    <property type="entry name" value="IRON-SULFUR CLUSTER CO-CHAPERONE PROTEIN HSCB"/>
    <property type="match status" value="1"/>
</dbReference>
<dbReference type="PANTHER" id="PTHR14021:SF15">
    <property type="entry name" value="IRON-SULFUR CLUSTER CO-CHAPERONE PROTEIN HSCB"/>
    <property type="match status" value="1"/>
</dbReference>
<dbReference type="Pfam" id="PF00226">
    <property type="entry name" value="DnaJ"/>
    <property type="match status" value="1"/>
</dbReference>
<dbReference type="Pfam" id="PF07743">
    <property type="entry name" value="HSCB_C"/>
    <property type="match status" value="1"/>
</dbReference>
<dbReference type="SMART" id="SM00271">
    <property type="entry name" value="DnaJ"/>
    <property type="match status" value="1"/>
</dbReference>
<dbReference type="SUPFAM" id="SSF46565">
    <property type="entry name" value="Chaperone J-domain"/>
    <property type="match status" value="1"/>
</dbReference>
<dbReference type="SUPFAM" id="SSF47144">
    <property type="entry name" value="HSC20 (HSCB), C-terminal oligomerisation domain"/>
    <property type="match status" value="1"/>
</dbReference>
<dbReference type="PROSITE" id="PS50076">
    <property type="entry name" value="DNAJ_2"/>
    <property type="match status" value="1"/>
</dbReference>
<keyword id="KW-0143">Chaperone</keyword>
<protein>
    <recommendedName>
        <fullName evidence="1">Co-chaperone protein HscB homolog</fullName>
    </recommendedName>
</protein>